<proteinExistence type="inferred from homology"/>
<protein>
    <recommendedName>
        <fullName>Uncharacterized protein L185</fullName>
    </recommendedName>
</protein>
<organismHost>
    <name type="scientific">Acanthamoeba polyphaga</name>
    <name type="common">Amoeba</name>
    <dbReference type="NCBI Taxonomy" id="5757"/>
</organismHost>
<accession>Q5URB5</accession>
<feature type="chain" id="PRO_0000071241" description="Uncharacterized protein L185">
    <location>
        <begin position="1"/>
        <end position="392"/>
    </location>
</feature>
<keyword id="KW-1185">Reference proteome</keyword>
<reference key="1">
    <citation type="journal article" date="2004" name="Science">
        <title>The 1.2-megabase genome sequence of Mimivirus.</title>
        <authorList>
            <person name="Raoult D."/>
            <person name="Audic S."/>
            <person name="Robert C."/>
            <person name="Abergel C."/>
            <person name="Renesto P."/>
            <person name="Ogata H."/>
            <person name="La Scola B."/>
            <person name="Susan M."/>
            <person name="Claverie J.-M."/>
        </authorList>
    </citation>
    <scope>NUCLEOTIDE SEQUENCE [LARGE SCALE GENOMIC DNA]</scope>
    <source>
        <strain>Rowbotham-Bradford</strain>
    </source>
</reference>
<sequence length="392" mass="46253">MCDFVFRYDSHIENKLSKYIKTTNGKTLLQVSNNKFITIKIGSSYGKKYISVSFNDSICFMNFIVGKRIHCQTNTISNCECCTNYTCYCKYIFQNRCIEHIKIFIAKYLPMIREISNHKFKLIDLIKVDTINNNPTVFNSIKLIKFDTNNDLIFNNDLILLIFEYGFFEDTIDVVKILLDSIQHVTFEFIDTLINIFKKNINGKDRKYFMDKIKSHTFNLSLMDFIKPVLSTDNVDLFYYVIDELTTIVGQIFCDNDTSECDNIDKLDTKFKYDSSKSIKIINHLVSISFYCPKIFKQLLIDINNIDLISDIINKLVFYNYIEYVVIIFDYLGSNIQKFIDEIFLYATSIDMIDLLIDYGADYEKIYRNRKFHKLREDIIVHIKKLIKSNKN</sequence>
<name>YL185_MIMIV</name>
<comment type="similarity">
    <text evidence="1">Belongs to the mimivirus L17x/L18x family.</text>
</comment>
<gene>
    <name type="ordered locus">MIMI_L185</name>
</gene>
<dbReference type="EMBL" id="AY653733">
    <property type="protein sequence ID" value="AAV50459.1"/>
    <property type="molecule type" value="Genomic_DNA"/>
</dbReference>
<dbReference type="KEGG" id="vg:9924787"/>
<dbReference type="Proteomes" id="UP000001134">
    <property type="component" value="Genome"/>
</dbReference>
<evidence type="ECO:0000305" key="1"/>
<organism>
    <name type="scientific">Acanthamoeba polyphaga mimivirus</name>
    <name type="common">APMV</name>
    <dbReference type="NCBI Taxonomy" id="212035"/>
    <lineage>
        <taxon>Viruses</taxon>
        <taxon>Varidnaviria</taxon>
        <taxon>Bamfordvirae</taxon>
        <taxon>Nucleocytoviricota</taxon>
        <taxon>Megaviricetes</taxon>
        <taxon>Imitervirales</taxon>
        <taxon>Mimiviridae</taxon>
        <taxon>Megamimivirinae</taxon>
        <taxon>Mimivirus</taxon>
        <taxon>Mimivirus bradfordmassiliense</taxon>
    </lineage>
</organism>